<dbReference type="EMBL" id="CP001339">
    <property type="protein sequence ID" value="ACL73408.1"/>
    <property type="molecule type" value="Genomic_DNA"/>
</dbReference>
<dbReference type="RefSeq" id="WP_012638884.1">
    <property type="nucleotide sequence ID" value="NC_011901.1"/>
</dbReference>
<dbReference type="SMR" id="B8GV62"/>
<dbReference type="STRING" id="396588.Tgr7_2328"/>
<dbReference type="KEGG" id="tgr:Tgr7_2328"/>
<dbReference type="eggNOG" id="COG0049">
    <property type="taxonomic scope" value="Bacteria"/>
</dbReference>
<dbReference type="HOGENOM" id="CLU_072226_1_1_6"/>
<dbReference type="OrthoDB" id="9807653at2"/>
<dbReference type="Proteomes" id="UP000002383">
    <property type="component" value="Chromosome"/>
</dbReference>
<dbReference type="GO" id="GO:0015935">
    <property type="term" value="C:small ribosomal subunit"/>
    <property type="evidence" value="ECO:0007669"/>
    <property type="project" value="InterPro"/>
</dbReference>
<dbReference type="GO" id="GO:0019843">
    <property type="term" value="F:rRNA binding"/>
    <property type="evidence" value="ECO:0007669"/>
    <property type="project" value="UniProtKB-UniRule"/>
</dbReference>
<dbReference type="GO" id="GO:0003735">
    <property type="term" value="F:structural constituent of ribosome"/>
    <property type="evidence" value="ECO:0007669"/>
    <property type="project" value="InterPro"/>
</dbReference>
<dbReference type="GO" id="GO:0000049">
    <property type="term" value="F:tRNA binding"/>
    <property type="evidence" value="ECO:0007669"/>
    <property type="project" value="UniProtKB-UniRule"/>
</dbReference>
<dbReference type="GO" id="GO:0006412">
    <property type="term" value="P:translation"/>
    <property type="evidence" value="ECO:0007669"/>
    <property type="project" value="UniProtKB-UniRule"/>
</dbReference>
<dbReference type="CDD" id="cd14869">
    <property type="entry name" value="uS7_Bacteria"/>
    <property type="match status" value="1"/>
</dbReference>
<dbReference type="FunFam" id="1.10.455.10:FF:000001">
    <property type="entry name" value="30S ribosomal protein S7"/>
    <property type="match status" value="1"/>
</dbReference>
<dbReference type="Gene3D" id="1.10.455.10">
    <property type="entry name" value="Ribosomal protein S7 domain"/>
    <property type="match status" value="1"/>
</dbReference>
<dbReference type="HAMAP" id="MF_00480_B">
    <property type="entry name" value="Ribosomal_uS7_B"/>
    <property type="match status" value="1"/>
</dbReference>
<dbReference type="InterPro" id="IPR000235">
    <property type="entry name" value="Ribosomal_uS7"/>
</dbReference>
<dbReference type="InterPro" id="IPR005717">
    <property type="entry name" value="Ribosomal_uS7_bac/org-type"/>
</dbReference>
<dbReference type="InterPro" id="IPR020606">
    <property type="entry name" value="Ribosomal_uS7_CS"/>
</dbReference>
<dbReference type="InterPro" id="IPR023798">
    <property type="entry name" value="Ribosomal_uS7_dom"/>
</dbReference>
<dbReference type="InterPro" id="IPR036823">
    <property type="entry name" value="Ribosomal_uS7_dom_sf"/>
</dbReference>
<dbReference type="NCBIfam" id="TIGR01029">
    <property type="entry name" value="rpsG_bact"/>
    <property type="match status" value="1"/>
</dbReference>
<dbReference type="PANTHER" id="PTHR11205">
    <property type="entry name" value="RIBOSOMAL PROTEIN S7"/>
    <property type="match status" value="1"/>
</dbReference>
<dbReference type="Pfam" id="PF00177">
    <property type="entry name" value="Ribosomal_S7"/>
    <property type="match status" value="1"/>
</dbReference>
<dbReference type="PIRSF" id="PIRSF002122">
    <property type="entry name" value="RPS7p_RPS7a_RPS5e_RPS7o"/>
    <property type="match status" value="1"/>
</dbReference>
<dbReference type="SUPFAM" id="SSF47973">
    <property type="entry name" value="Ribosomal protein S7"/>
    <property type="match status" value="1"/>
</dbReference>
<dbReference type="PROSITE" id="PS00052">
    <property type="entry name" value="RIBOSOMAL_S7"/>
    <property type="match status" value="1"/>
</dbReference>
<keyword id="KW-1185">Reference proteome</keyword>
<keyword id="KW-0687">Ribonucleoprotein</keyword>
<keyword id="KW-0689">Ribosomal protein</keyword>
<keyword id="KW-0694">RNA-binding</keyword>
<keyword id="KW-0699">rRNA-binding</keyword>
<keyword id="KW-0820">tRNA-binding</keyword>
<name>RS7_THISH</name>
<evidence type="ECO:0000255" key="1">
    <source>
        <dbReference type="HAMAP-Rule" id="MF_00480"/>
    </source>
</evidence>
<evidence type="ECO:0000305" key="2"/>
<feature type="chain" id="PRO_1000135633" description="Small ribosomal subunit protein uS7">
    <location>
        <begin position="1"/>
        <end position="155"/>
    </location>
</feature>
<protein>
    <recommendedName>
        <fullName evidence="1">Small ribosomal subunit protein uS7</fullName>
    </recommendedName>
    <alternativeName>
        <fullName evidence="2">30S ribosomal protein S7</fullName>
    </alternativeName>
</protein>
<gene>
    <name evidence="1" type="primary">rpsG</name>
    <name type="ordered locus">Tgr7_2328</name>
</gene>
<organism>
    <name type="scientific">Thioalkalivibrio sulfidiphilus (strain HL-EbGR7)</name>
    <dbReference type="NCBI Taxonomy" id="396588"/>
    <lineage>
        <taxon>Bacteria</taxon>
        <taxon>Pseudomonadati</taxon>
        <taxon>Pseudomonadota</taxon>
        <taxon>Gammaproteobacteria</taxon>
        <taxon>Chromatiales</taxon>
        <taxon>Ectothiorhodospiraceae</taxon>
        <taxon>Thioalkalivibrio</taxon>
    </lineage>
</organism>
<accession>B8GV62</accession>
<reference key="1">
    <citation type="journal article" date="2011" name="Stand. Genomic Sci.">
        <title>Complete genome sequence of 'Thioalkalivibrio sulfidophilus' HL-EbGr7.</title>
        <authorList>
            <person name="Muyzer G."/>
            <person name="Sorokin D.Y."/>
            <person name="Mavromatis K."/>
            <person name="Lapidus A."/>
            <person name="Clum A."/>
            <person name="Ivanova N."/>
            <person name="Pati A."/>
            <person name="d'Haeseleer P."/>
            <person name="Woyke T."/>
            <person name="Kyrpides N.C."/>
        </authorList>
    </citation>
    <scope>NUCLEOTIDE SEQUENCE [LARGE SCALE GENOMIC DNA]</scope>
    <source>
        <strain>HL-EbGR7</strain>
    </source>
</reference>
<proteinExistence type="inferred from homology"/>
<sequence>MSRRSEAPKRQILPDPKYKSDLLAKFINTVMKDGKKSVAERVLYGALTQIEGKKGDGIQVLEQALDNVRPRVEVKSRRVGGATYQVPVEVRPVRQNALAMRWIVDAARKRGEKSMALKLAGELMDAADSKGSAVKKREDTHRMAEANKAFSHYRW</sequence>
<comment type="function">
    <text evidence="1">One of the primary rRNA binding proteins, it binds directly to 16S rRNA where it nucleates assembly of the head domain of the 30S subunit. Is located at the subunit interface close to the decoding center, probably blocks exit of the E-site tRNA.</text>
</comment>
<comment type="subunit">
    <text evidence="1">Part of the 30S ribosomal subunit. Contacts proteins S9 and S11.</text>
</comment>
<comment type="similarity">
    <text evidence="1">Belongs to the universal ribosomal protein uS7 family.</text>
</comment>